<sequence>MIMSTDPNNILMRYLKNLTDDKFKCIIHQSSDFLYLSDRDYTSITKETLVSEIVEEYPDDCNKILAIIFLVLDKDIDVDIDIETKLKPKPAVRYAILDKMTKDIKLTDLVRHYFRYIEQDIPLGPLFKKIDSYRIRAINKYSKELGLATEYFNKYGHLMFYTLPIPYNRFFCRNSIGFLAVLSPTIGHVKAFYKFIEYVSIDDRRKFKKELMSK</sequence>
<reference key="1">
    <citation type="journal article" date="1993" name="FEBS Lett.">
        <title>Genes of variola and vaccinia viruses necessary to overcome the host protective mechanisms.</title>
        <authorList>
            <person name="Shchelkunov S.N."/>
            <person name="Blinov V.M."/>
            <person name="Sandakhchiev L.S."/>
        </authorList>
    </citation>
    <scope>NUCLEOTIDE SEQUENCE [GENOMIC DNA]</scope>
    <source>
        <strain>India-1967 / Isolate Ind3</strain>
    </source>
</reference>
<reference key="2">
    <citation type="submission" date="1994-12" db="EMBL/GenBank/DDBJ databases">
        <authorList>
            <person name="Massung R.F."/>
            <person name="Loparev V.N."/>
            <person name="Knight J.C."/>
            <person name="Chizhikov V.E."/>
            <person name="Parsons J.M."/>
            <person name="Totmenin A.V."/>
            <person name="Shchelkunov S.N."/>
            <person name="Esposito J.J."/>
        </authorList>
    </citation>
    <scope>NUCLEOTIDE SEQUENCE [GENOMIC DNA]</scope>
    <source>
        <strain>Congo-1965</strain>
    </source>
</reference>
<evidence type="ECO:0000250" key="1">
    <source>
        <dbReference type="UniProtKB" id="P17368"/>
    </source>
</evidence>
<evidence type="ECO:0000305" key="2"/>
<feature type="chain" id="PRO_0000099376" description="Protein OPG034">
    <location>
        <begin position="1"/>
        <end position="214"/>
    </location>
</feature>
<organism>
    <name type="scientific">Variola virus (isolate Human/India/Ind3/1967)</name>
    <name type="common">VARV</name>
    <name type="synonym">Smallpox virus</name>
    <dbReference type="NCBI Taxonomy" id="587200"/>
    <lineage>
        <taxon>Viruses</taxon>
        <taxon>Varidnaviria</taxon>
        <taxon>Bamfordvirae</taxon>
        <taxon>Nucleocytoviricota</taxon>
        <taxon>Pokkesviricetes</taxon>
        <taxon>Chitovirales</taxon>
        <taxon>Poxviridae</taxon>
        <taxon>Chordopoxvirinae</taxon>
        <taxon>Orthopoxvirus</taxon>
        <taxon>Variola virus</taxon>
    </lineage>
</organism>
<protein>
    <recommendedName>
        <fullName>Protein OPG034</fullName>
    </recommendedName>
</protein>
<keyword id="KW-0244">Early protein</keyword>
<keyword id="KW-1185">Reference proteome</keyword>
<proteinExistence type="inferred from homology"/>
<comment type="induction">
    <text evidence="1">Expressed in the early phase of the viral replicative cycle.</text>
</comment>
<comment type="similarity">
    <text evidence="2">Belongs to the orthopoxvirus OPG034 family.</text>
</comment>
<name>PG034_VAR67</name>
<gene>
    <name type="primary">OPG034</name>
    <name type="synonym">C1L</name>
    <name type="synonym">D14L</name>
    <name type="synonym">D18L</name>
</gene>
<dbReference type="EMBL" id="X69198">
    <property type="protein sequence ID" value="CAA48956.1"/>
    <property type="molecule type" value="Genomic_DNA"/>
</dbReference>
<dbReference type="EMBL" id="U18337">
    <property type="protein sequence ID" value="AAA69320.1"/>
    <property type="molecule type" value="Genomic_DNA"/>
</dbReference>
<dbReference type="PIR" id="E36838">
    <property type="entry name" value="E36838"/>
</dbReference>
<dbReference type="RefSeq" id="NP_042059.1">
    <property type="nucleotide sequence ID" value="NC_001611.1"/>
</dbReference>
<dbReference type="SMR" id="P33859"/>
<dbReference type="GeneID" id="1486395"/>
<dbReference type="KEGG" id="vg:1486395"/>
<dbReference type="Proteomes" id="UP000002060">
    <property type="component" value="Segment"/>
</dbReference>
<dbReference type="InterPro" id="IPR008724">
    <property type="entry name" value="Orthopox_C1"/>
</dbReference>
<dbReference type="InterPro" id="IPR022819">
    <property type="entry name" value="Poxvirus_Bcl-2-like"/>
</dbReference>
<dbReference type="Pfam" id="PF06227">
    <property type="entry name" value="Poxv_Bcl-2-like"/>
    <property type="match status" value="1"/>
</dbReference>
<dbReference type="PIRSF" id="PIRSF003783">
    <property type="entry name" value="VAC_C1L"/>
    <property type="match status" value="1"/>
</dbReference>
<accession>P33859</accession>
<organismHost>
    <name type="scientific">Homo sapiens</name>
    <name type="common">Human</name>
    <dbReference type="NCBI Taxonomy" id="9606"/>
</organismHost>